<protein>
    <recommendedName>
        <fullName>Immunoglobulin A1 protease</fullName>
        <shortName>IgA1 protease</shortName>
        <ecNumber>3.4.24.13</ecNumber>
    </recommendedName>
    <alternativeName>
        <fullName>IgA-specific zinc metalloproteinase</fullName>
    </alternativeName>
</protein>
<feature type="signal peptide" evidence="2">
    <location>
        <begin position="1"/>
        <end position="36"/>
    </location>
</feature>
<feature type="propeptide" id="PRO_0000026837" evidence="2">
    <location>
        <begin position="37"/>
        <end position="99"/>
    </location>
</feature>
<feature type="chain" id="PRO_0000026838" description="Immunoglobulin A1 protease">
    <location>
        <begin position="100"/>
        <end position="1963"/>
    </location>
</feature>
<feature type="transmembrane region" description="Helical" evidence="2">
    <location>
        <begin position="106"/>
        <end position="125"/>
    </location>
</feature>
<feature type="transmembrane region" description="Helical" evidence="2">
    <location>
        <begin position="132"/>
        <end position="154"/>
    </location>
</feature>
<feature type="topological domain" description="Extracellular" evidence="2">
    <location>
        <begin position="155"/>
        <end position="1963"/>
    </location>
</feature>
<feature type="domain" description="G5" evidence="3">
    <location>
        <begin position="314"/>
        <end position="393"/>
    </location>
</feature>
<feature type="repeat" description="1">
    <location>
        <begin position="419"/>
        <end position="435"/>
    </location>
</feature>
<feature type="repeat" description="2">
    <location>
        <begin position="436"/>
        <end position="452"/>
    </location>
</feature>
<feature type="repeat" description="3">
    <location>
        <begin position="453"/>
        <end position="469"/>
    </location>
</feature>
<feature type="region of interest" description="Disordered" evidence="6">
    <location>
        <begin position="253"/>
        <end position="305"/>
    </location>
</feature>
<feature type="region of interest" description="Disordered" evidence="6">
    <location>
        <begin position="402"/>
        <end position="681"/>
    </location>
</feature>
<feature type="region of interest" description="3 X 17 AA approximate tandem repeats">
    <location>
        <begin position="419"/>
        <end position="469"/>
    </location>
</feature>
<feature type="short sequence motif" description="LPXTG sorting signal" evidence="4">
    <location>
        <begin position="96"/>
        <end position="100"/>
    </location>
</feature>
<feature type="compositionally biased region" description="Basic and acidic residues" evidence="6">
    <location>
        <begin position="276"/>
        <end position="296"/>
    </location>
</feature>
<feature type="compositionally biased region" description="Basic and acidic residues" evidence="6">
    <location>
        <begin position="485"/>
        <end position="511"/>
    </location>
</feature>
<feature type="compositionally biased region" description="Polar residues" evidence="6">
    <location>
        <begin position="516"/>
        <end position="529"/>
    </location>
</feature>
<feature type="compositionally biased region" description="Polar residues" evidence="6">
    <location>
        <begin position="538"/>
        <end position="572"/>
    </location>
</feature>
<feature type="compositionally biased region" description="Basic and acidic residues" evidence="6">
    <location>
        <begin position="574"/>
        <end position="591"/>
    </location>
</feature>
<feature type="compositionally biased region" description="Polar residues" evidence="6">
    <location>
        <begin position="618"/>
        <end position="639"/>
    </location>
</feature>
<feature type="compositionally biased region" description="Polar residues" evidence="6">
    <location>
        <begin position="648"/>
        <end position="674"/>
    </location>
</feature>
<feature type="active site" evidence="5">
    <location>
        <position position="1605"/>
    </location>
</feature>
<feature type="binding site" evidence="1">
    <location>
        <position position="1604"/>
    </location>
    <ligand>
        <name>Zn(2+)</name>
        <dbReference type="ChEBI" id="CHEBI:29105"/>
    </ligand>
</feature>
<feature type="binding site" evidence="1">
    <location>
        <position position="1608"/>
    </location>
    <ligand>
        <name>Zn(2+)</name>
        <dbReference type="ChEBI" id="CHEBI:29105"/>
    </ligand>
</feature>
<feature type="binding site" evidence="1">
    <location>
        <position position="1628"/>
    </location>
    <ligand>
        <name>Zn(2+)</name>
        <dbReference type="ChEBI" id="CHEBI:29105"/>
    </ligand>
</feature>
<feature type="modified residue" description="Pentaglycyl murein peptidoglycan amidated threonine" evidence="4">
    <location>
        <position position="99"/>
    </location>
</feature>
<feature type="sequence conflict" description="In Ref. 1; AAC44568." evidence="8" ref="1">
    <original>T</original>
    <variation>S</variation>
    <location>
        <position position="766"/>
    </location>
</feature>
<feature type="sequence conflict" description="In Ref. 1; AAC44568." evidence="8" ref="1">
    <original>N</original>
    <variation>I</variation>
    <location>
        <position position="835"/>
    </location>
</feature>
<feature type="sequence conflict" description="In Ref. 1; AAC44568." evidence="8" ref="1">
    <original>A</original>
    <variation>P</variation>
    <location>
        <position position="1205"/>
    </location>
</feature>
<feature type="sequence conflict" description="In Ref. 1." evidence="8" ref="1">
    <original>DEQSREKLYRTIL</original>
    <variation>VNSQRRKTLFVRFS</variation>
    <location>
        <begin position="1520"/>
        <end position="1532"/>
    </location>
</feature>
<feature type="sequence conflict" description="In Ref. 1; AAC44568." evidence="8" ref="1">
    <original>T</original>
    <variation>N</variation>
    <location>
        <position position="1601"/>
    </location>
</feature>
<feature type="sequence conflict" description="In Ref. 1; AAC44568." evidence="8" ref="1">
    <original>S</original>
    <variation>F</variation>
    <location>
        <position position="1650"/>
    </location>
</feature>
<feature type="sequence conflict" description="In Ref. 1; AAC44568." evidence="8" ref="1">
    <original>L</original>
    <variation>F</variation>
    <location>
        <position position="1680"/>
    </location>
</feature>
<feature type="sequence conflict" description="In Ref. 1; AAC44568." evidence="8" ref="1">
    <original>VDQF</original>
    <variation>WISL</variation>
    <location>
        <begin position="1876"/>
        <end position="1879"/>
    </location>
</feature>
<reference key="1">
    <citation type="journal article" date="1996" name="Infect. Immun.">
        <title>Identification, cloning and sequencing of the immunoglobulin A1 protease gene of Streptococcus pneumoniae.</title>
        <authorList>
            <person name="Wani J.H."/>
            <person name="Gilbert J.V."/>
            <person name="Plaut A.G."/>
            <person name="Weiser J.N."/>
        </authorList>
    </citation>
    <scope>NUCLEOTIDE SEQUENCE [GENOMIC DNA]</scope>
    <scope>FUNCTION</scope>
    <scope>CELL SURFACE LOCALIZATION</scope>
</reference>
<reference key="2">
    <citation type="journal article" date="2001" name="J. Bacteriol.">
        <title>Genome of the bacterium Streptococcus pneumoniae strain R6.</title>
        <authorList>
            <person name="Hoskins J."/>
            <person name="Alborn W.E. Jr."/>
            <person name="Arnold J."/>
            <person name="Blaszczak L.C."/>
            <person name="Burgett S."/>
            <person name="DeHoff B.S."/>
            <person name="Estrem S.T."/>
            <person name="Fritz L."/>
            <person name="Fu D.-J."/>
            <person name="Fuller W."/>
            <person name="Geringer C."/>
            <person name="Gilmour R."/>
            <person name="Glass J.S."/>
            <person name="Khoja H."/>
            <person name="Kraft A.R."/>
            <person name="Lagace R.E."/>
            <person name="LeBlanc D.J."/>
            <person name="Lee L.N."/>
            <person name="Lefkowitz E.J."/>
            <person name="Lu J."/>
            <person name="Matsushima P."/>
            <person name="McAhren S.M."/>
            <person name="McHenney M."/>
            <person name="McLeaster K."/>
            <person name="Mundy C.W."/>
            <person name="Nicas T.I."/>
            <person name="Norris F.H."/>
            <person name="O'Gara M."/>
            <person name="Peery R.B."/>
            <person name="Robertson G.T."/>
            <person name="Rockey P."/>
            <person name="Sun P.-M."/>
            <person name="Winkler M.E."/>
            <person name="Yang Y."/>
            <person name="Young-Bellido M."/>
            <person name="Zhao G."/>
            <person name="Zook C.A."/>
            <person name="Baltz R.H."/>
            <person name="Jaskunas S.R."/>
            <person name="Rosteck P.R. Jr."/>
            <person name="Skatrud P.L."/>
            <person name="Glass J.I."/>
        </authorList>
    </citation>
    <scope>NUCLEOTIDE SEQUENCE [LARGE SCALE GENOMIC DNA]</scope>
    <source>
        <strain>ATCC BAA-255 / R6</strain>
    </source>
</reference>
<keyword id="KW-0002">3D-structure</keyword>
<keyword id="KW-0134">Cell wall</keyword>
<keyword id="KW-0378">Hydrolase</keyword>
<keyword id="KW-0472">Membrane</keyword>
<keyword id="KW-0479">Metal-binding</keyword>
<keyword id="KW-0482">Metalloprotease</keyword>
<keyword id="KW-0572">Peptidoglycan-anchor</keyword>
<keyword id="KW-0645">Protease</keyword>
<keyword id="KW-1185">Reference proteome</keyword>
<keyword id="KW-0677">Repeat</keyword>
<keyword id="KW-0964">Secreted</keyword>
<keyword id="KW-0732">Signal</keyword>
<keyword id="KW-0812">Transmembrane</keyword>
<keyword id="KW-1133">Transmembrane helix</keyword>
<keyword id="KW-0862">Zinc</keyword>
<evidence type="ECO:0000250" key="1"/>
<evidence type="ECO:0000255" key="2"/>
<evidence type="ECO:0000255" key="3">
    <source>
        <dbReference type="PROSITE-ProRule" id="PRU00437"/>
    </source>
</evidence>
<evidence type="ECO:0000255" key="4">
    <source>
        <dbReference type="PROSITE-ProRule" id="PRU00477"/>
    </source>
</evidence>
<evidence type="ECO:0000255" key="5">
    <source>
        <dbReference type="PROSITE-ProRule" id="PRU10095"/>
    </source>
</evidence>
<evidence type="ECO:0000256" key="6">
    <source>
        <dbReference type="SAM" id="MobiDB-lite"/>
    </source>
</evidence>
<evidence type="ECO:0000269" key="7">
    <source>
    </source>
</evidence>
<evidence type="ECO:0000305" key="8"/>
<name>IGA1_STRR6</name>
<accession>Q59947</accession>
<accession>Q8DPR5</accession>
<sequence length="1963" mass="218571">MEKYFGEKQERFSFRKLSVGLVSATISSLFFMSVLASSSVDAQETAGVHYKYVADSELSSEEKKQLVYDIPTYVENDDETYYLVYKLNSQNQLAELPNTGSKNERQALVAGASLAALGILIFAVSKKKVKNKTVLHLVLVAGMGNGVLVSVHALENHLLLNYNTDYELTSGEKLPLPKEISGYTYIGYIKEGKTTSDFEVSNQEKSAATPTKQQKVDYNVTPNFVDHPSTVQAIQEQTPVSSTKPTEVQVVEKPFSTELINPRKEEKQSSDSQEQLAEHKNLETKKEEKISPKEKTGVNTLNPQDEVLSGQLNKPELLYREETIETKIDFQEEIQENPDLAEGTVRVKQEGKLGKKVEIVRIFSVNKEEVSREIVSTSTTAPSPRIVEKGTKKTQVIKEQPETGVEHKDVQSGAIVEPAIQPELPEAVVSDKGEPEVQPTLPEAVVTDKGETEVQPESPDTVVSDKGEPEQVAPLPEYKGNIEQVKPETPVEKTKEQGPEKTEEVPVKPTEETPVNPNEGTTEGTSIQEAENPVQPAEESTTNSEKVSPDTSSENTGEVSSNPSDSTTSVGESNKPEHNDSKNENSEKTVEEVPVNPNEGTVEGTSNQETEKPVQPAEETQTNSGKIANENTGEVSNKPSDSKPPVEESNQPEKNGTATKPENSGNTTSENGQTEPEKKLELRNVSDIELYSQTNGTYRQHVSLDGIPENTDTYFVKVKSSAFKDVYIPVASITEEKRNGQSVYKITAKAEKLQQELENKYVDNFTFYLDKKAKEENTNFTSFSNLVKAINQNPSGTYHLAASLNANEVELGPDERSYIKDTFTGRLIGEKDGKNYAIYNLKKPLFENLSGATVEKLSLKNVAISGKNDIGSLANEATNGTKIKQVHVDGVLAGERGVGGLLAKADQSSIAESSFKGRIVNTYETTDAYNIGGLVGHLTGKNASIAKSKATVTISSNTNRSDQTVGGLAGLVDQDAHIQNSYAEGDINNVKHFGKVAGVAGYLWDRTSGEEKHAGELTNVLSDVNVTNGNAITGYHYTGMKVANTFSSKANRVFNVTLEKDEVVSKESFEERGTMLDASQIVSKKAEINPLTLPTVEPLSTSGKKDSDFSKIAHYQANRALVYKNIEKLLPFYNKSTIVKYGNLVKENSLLYQKELLSAVMMKDDQVITDIVSNKQTANKLLLHYNDHSSEKFDLKYQTDFANLAEYNLGNTGLLYTPNQFLYDRDSIVKEVLPELQKLDYQSDAIRKTLGISPEVKLTELYLEDQFSKTKQNLGDSLKKLLSADAGLASDNSVTRGYLVDKIKNNKEALLLGLTYLERWYNFNYGQVNVKDLVMYHPDFFGKGNTSPLDTLIELGKSGFNNLLAKNNVDTYGISLASQHGATDLFSTLEHYRKVFLPNTSNNDWFKSETKAYIVEEKSTIEEVKTKQGLAGTKYSIGVYDRITSATWKYRNMVLPLLTLPERSVFVISTMSSLGFGAYDRYRSSDHKAGKALNDFVEENARETAKRQRDHYDYWYRILDEQSREKLYRTILLYDAYKFGDDTTSGKATAEAKFDSSNPAMKNFFGPVGNKVVHNQHGAYATGDGVYYMSYRMLDKDGAITYTHEMTHDSDQDIYLGGYGRRNGLGPEFFAKGLLQAPDQPSDATITINSILKHSKSDSTEGSRLQVLDPTERFQNAADLQNYVHNMFDLIYMMEYLEGQSIVNKLSVYQKMAALRKIENKYVKDPADGNEVYATNVVKELTEAEARNLNSFESLIDHNILSAREYQSGDYERNGYYTIKLFAPIYSALSSEKGTPGDLMGRRIAYELLAAKGFKDGMVPYISNQYEEDAKQQGQTINLYGKERGLVTDELVLKKVFDGKYKTWAEFKTAMYQERVDQFGNLKQVTFKDPTKPWPSYGTKTINNVDELQALMDQAVLKDAEGPRWSNYDPEIDSAVHKLKRAIFKAYLDQTNDFRSSIFENKK</sequence>
<gene>
    <name type="primary">iga</name>
    <name type="ordered locus">spr1042</name>
</gene>
<organism>
    <name type="scientific">Streptococcus pneumoniae (strain ATCC BAA-255 / R6)</name>
    <dbReference type="NCBI Taxonomy" id="171101"/>
    <lineage>
        <taxon>Bacteria</taxon>
        <taxon>Bacillati</taxon>
        <taxon>Bacillota</taxon>
        <taxon>Bacilli</taxon>
        <taxon>Lactobacillales</taxon>
        <taxon>Streptococcaceae</taxon>
        <taxon>Streptococcus</taxon>
    </lineage>
</organism>
<comment type="function">
    <text evidence="7">Zinc metalloproteinase which cleaves human immunoglobulin A1 (IgA1) in the hinge region.</text>
</comment>
<comment type="catalytic activity">
    <reaction>
        <text>Cleavage of Pro-|-Thr bond in the hinge region of the heavy chain of human IgA.</text>
        <dbReference type="EC" id="3.4.24.13"/>
    </reaction>
</comment>
<comment type="cofactor">
    <cofactor evidence="1">
        <name>Zn(2+)</name>
        <dbReference type="ChEBI" id="CHEBI:29105"/>
    </cofactor>
    <text evidence="1">Binds 1 zinc ion per subunit.</text>
</comment>
<comment type="subcellular location">
    <subcellularLocation>
        <location>Secreted</location>
        <location>Cell wall</location>
    </subcellularLocation>
    <subcellularLocation>
        <location>Membrane</location>
        <topology>Multi-pass membrane protein</topology>
    </subcellularLocation>
    <subcellularLocation>
        <location>Secreted</location>
        <location>Cell wall</location>
        <topology>Peptidoglycan-anchor</topology>
    </subcellularLocation>
</comment>
<comment type="PTM">
    <text>The Gram-positive cell-wall anchor motif LPXTG is located in the N-terminal part, in contrast to such motifs in other known streptococcal and staphylococcal proteins. The protease could be cleaved by the sortase and anchored in the membrane via the two potential N-terminal transmembrane domains, whereas the propeptide located prior to the LPXTG motif would remain attached to the cell wall peptidoglycan by an amide bond.</text>
</comment>
<comment type="similarity">
    <text evidence="8">Belongs to the peptidase M26 family.</text>
</comment>
<proteinExistence type="evidence at protein level"/>
<dbReference type="EC" id="3.4.24.13"/>
<dbReference type="EMBL" id="U47687">
    <property type="protein sequence ID" value="AAC44568.1"/>
    <property type="molecule type" value="Genomic_DNA"/>
</dbReference>
<dbReference type="EMBL" id="AE007317">
    <property type="protein sequence ID" value="AAK99846.1"/>
    <property type="molecule type" value="Genomic_DNA"/>
</dbReference>
<dbReference type="PIR" id="B98002">
    <property type="entry name" value="B98002"/>
</dbReference>
<dbReference type="RefSeq" id="NP_358636.1">
    <property type="nucleotide sequence ID" value="NC_003098.1"/>
</dbReference>
<dbReference type="RefSeq" id="WP_000417171.1">
    <property type="nucleotide sequence ID" value="NC_003098.1"/>
</dbReference>
<dbReference type="PDB" id="6XJA">
    <property type="method" value="EM"/>
    <property type="resolution" value="4.00 A"/>
    <property type="chains" value="P=665-1963"/>
</dbReference>
<dbReference type="PDB" id="6XJB">
    <property type="method" value="EM"/>
    <property type="resolution" value="3.80 A"/>
    <property type="chains" value="A=674-1958"/>
</dbReference>
<dbReference type="PDB" id="7JGJ">
    <property type="method" value="EM"/>
    <property type="resolution" value="4.80 A"/>
    <property type="chains" value="A=674-1963"/>
</dbReference>
<dbReference type="PDBsum" id="6XJA"/>
<dbReference type="PDBsum" id="6XJB"/>
<dbReference type="PDBsum" id="7JGJ"/>
<dbReference type="EMDB" id="EMD-22204"/>
<dbReference type="EMDB" id="EMD-22205"/>
<dbReference type="SMR" id="Q59947"/>
<dbReference type="STRING" id="171101.spr1042"/>
<dbReference type="MEROPS" id="M26.001"/>
<dbReference type="KEGG" id="spr:spr1042"/>
<dbReference type="PATRIC" id="fig|171101.6.peg.1133"/>
<dbReference type="eggNOG" id="COG0810">
    <property type="taxonomic scope" value="Bacteria"/>
</dbReference>
<dbReference type="eggNOG" id="COG3583">
    <property type="taxonomic scope" value="Bacteria"/>
</dbReference>
<dbReference type="HOGENOM" id="CLU_000802_0_0_9"/>
<dbReference type="BRENDA" id="3.4.24.13">
    <property type="organism ID" value="1960"/>
</dbReference>
<dbReference type="Proteomes" id="UP000000586">
    <property type="component" value="Chromosome"/>
</dbReference>
<dbReference type="GO" id="GO:0005576">
    <property type="term" value="C:extracellular region"/>
    <property type="evidence" value="ECO:0007669"/>
    <property type="project" value="UniProtKB-KW"/>
</dbReference>
<dbReference type="GO" id="GO:0016020">
    <property type="term" value="C:membrane"/>
    <property type="evidence" value="ECO:0007669"/>
    <property type="project" value="UniProtKB-SubCell"/>
</dbReference>
<dbReference type="GO" id="GO:0004222">
    <property type="term" value="F:metalloendopeptidase activity"/>
    <property type="evidence" value="ECO:0007669"/>
    <property type="project" value="InterPro"/>
</dbReference>
<dbReference type="GO" id="GO:0008270">
    <property type="term" value="F:zinc ion binding"/>
    <property type="evidence" value="ECO:0007669"/>
    <property type="project" value="InterPro"/>
</dbReference>
<dbReference type="GO" id="GO:0006508">
    <property type="term" value="P:proteolysis"/>
    <property type="evidence" value="ECO:0007669"/>
    <property type="project" value="UniProtKB-KW"/>
</dbReference>
<dbReference type="Gene3D" id="2.160.20.110">
    <property type="match status" value="1"/>
</dbReference>
<dbReference type="Gene3D" id="2.20.230.10">
    <property type="entry name" value="Resuscitation-promoting factor rpfb"/>
    <property type="match status" value="1"/>
</dbReference>
<dbReference type="InterPro" id="IPR011098">
    <property type="entry name" value="G5_dom"/>
</dbReference>
<dbReference type="InterPro" id="IPR011493">
    <property type="entry name" value="GLUG"/>
</dbReference>
<dbReference type="InterPro" id="IPR019931">
    <property type="entry name" value="LPXTG_anchor"/>
</dbReference>
<dbReference type="InterPro" id="IPR011505">
    <property type="entry name" value="Peptidase_M26_C_dom"/>
</dbReference>
<dbReference type="InterPro" id="IPR008006">
    <property type="entry name" value="Peptidase_M26_N_dom"/>
</dbReference>
<dbReference type="InterPro" id="IPR005877">
    <property type="entry name" value="YSIRK_signal_dom"/>
</dbReference>
<dbReference type="NCBIfam" id="TIGR01167">
    <property type="entry name" value="LPXTG_anchor"/>
    <property type="match status" value="1"/>
</dbReference>
<dbReference type="NCBIfam" id="TIGR01168">
    <property type="entry name" value="YSIRK_signal"/>
    <property type="match status" value="1"/>
</dbReference>
<dbReference type="PANTHER" id="PTHR22929">
    <property type="entry name" value="RNA POLYMERASE III TRANSCRIPTION INITIATION FACTOR B"/>
    <property type="match status" value="1"/>
</dbReference>
<dbReference type="PANTHER" id="PTHR22929:SF0">
    <property type="entry name" value="TRANSCRIPTION FACTOR TFIIIB COMPONENT B'' HOMOLOG"/>
    <property type="match status" value="1"/>
</dbReference>
<dbReference type="Pfam" id="PF07501">
    <property type="entry name" value="G5"/>
    <property type="match status" value="1"/>
</dbReference>
<dbReference type="Pfam" id="PF07581">
    <property type="entry name" value="Glug"/>
    <property type="match status" value="2"/>
</dbReference>
<dbReference type="Pfam" id="PF00746">
    <property type="entry name" value="Gram_pos_anchor"/>
    <property type="match status" value="1"/>
</dbReference>
<dbReference type="Pfam" id="PF07580">
    <property type="entry name" value="Peptidase_M26_C"/>
    <property type="match status" value="1"/>
</dbReference>
<dbReference type="Pfam" id="PF05342">
    <property type="entry name" value="Peptidase_M26_N"/>
    <property type="match status" value="1"/>
</dbReference>
<dbReference type="Pfam" id="PF04650">
    <property type="entry name" value="YSIRK_signal"/>
    <property type="match status" value="1"/>
</dbReference>
<dbReference type="SMART" id="SM01208">
    <property type="entry name" value="G5"/>
    <property type="match status" value="1"/>
</dbReference>
<dbReference type="PROSITE" id="PS51109">
    <property type="entry name" value="G5"/>
    <property type="match status" value="1"/>
</dbReference>
<dbReference type="PROSITE" id="PS50847">
    <property type="entry name" value="GRAM_POS_ANCHORING"/>
    <property type="match status" value="1"/>
</dbReference>
<dbReference type="PROSITE" id="PS00142">
    <property type="entry name" value="ZINC_PROTEASE"/>
    <property type="match status" value="1"/>
</dbReference>